<feature type="chain" id="PRO_0000425741" description="Amino acid transporter heavy chain SLC3A1">
    <location>
        <begin position="1"/>
        <end position="685"/>
    </location>
</feature>
<feature type="topological domain" description="Cytoplasmic" evidence="3">
    <location>
        <begin position="1"/>
        <end position="88"/>
    </location>
</feature>
<feature type="transmembrane region" description="Helical; Signal-anchor for type II membrane protein" evidence="3">
    <location>
        <begin position="89"/>
        <end position="109"/>
    </location>
</feature>
<feature type="topological domain" description="Extracellular" evidence="3">
    <location>
        <begin position="110"/>
        <end position="685"/>
    </location>
</feature>
<feature type="region of interest" description="Disordered" evidence="4">
    <location>
        <begin position="1"/>
        <end position="53"/>
    </location>
</feature>
<feature type="compositionally biased region" description="Basic and acidic residues" evidence="4">
    <location>
        <begin position="1"/>
        <end position="10"/>
    </location>
</feature>
<feature type="binding site" evidence="1">
    <location>
        <position position="213"/>
    </location>
    <ligand>
        <name>Ca(2+)</name>
        <dbReference type="ChEBI" id="CHEBI:29108"/>
    </ligand>
</feature>
<feature type="binding site" evidence="1">
    <location>
        <position position="283"/>
    </location>
    <ligand>
        <name>Ca(2+)</name>
        <dbReference type="ChEBI" id="CHEBI:29108"/>
    </ligand>
</feature>
<feature type="binding site" evidence="1">
    <location>
        <position position="317"/>
    </location>
    <ligand>
        <name>Ca(2+)</name>
        <dbReference type="ChEBI" id="CHEBI:29108"/>
    </ligand>
</feature>
<feature type="binding site" evidence="1">
    <location>
        <position position="318"/>
    </location>
    <ligand>
        <name>Ca(2+)</name>
        <dbReference type="ChEBI" id="CHEBI:29108"/>
    </ligand>
</feature>
<feature type="binding site" evidence="1">
    <location>
        <position position="320"/>
    </location>
    <ligand>
        <name>Ca(2+)</name>
        <dbReference type="ChEBI" id="CHEBI:29108"/>
    </ligand>
</feature>
<feature type="modified residue" description="Phosphoserine" evidence="2">
    <location>
        <position position="385"/>
    </location>
</feature>
<feature type="glycosylation site" description="N-linked (GlcNAc...) asparagine" evidence="3">
    <location>
        <position position="213"/>
    </location>
</feature>
<feature type="glycosylation site" description="N-linked (GlcNAc...) asparagine" evidence="3">
    <location>
        <position position="240"/>
    </location>
</feature>
<feature type="glycosylation site" description="N-linked (GlcNAc...) asparagine" evidence="3">
    <location>
        <position position="260"/>
    </location>
</feature>
<feature type="glycosylation site" description="N-linked (GlcNAc...) asparagine" evidence="3">
    <location>
        <position position="331"/>
    </location>
</feature>
<feature type="glycosylation site" description="N-linked (GlcNAc...) asparagine" evidence="3">
    <location>
        <position position="512"/>
    </location>
</feature>
<feature type="glycosylation site" description="N-linked (GlcNAc...) asparagine" evidence="3">
    <location>
        <position position="522"/>
    </location>
</feature>
<feature type="disulfide bond" description="Interchain (with C-144 in SLC7A5)" evidence="1">
    <location>
        <position position="113"/>
    </location>
</feature>
<feature type="disulfide bond" evidence="1">
    <location>
        <begin position="241"/>
        <end position="272"/>
    </location>
</feature>
<feature type="disulfide bond" evidence="1">
    <location>
        <begin position="570"/>
        <end position="666"/>
    </location>
</feature>
<feature type="disulfide bond" evidence="1">
    <location>
        <begin position="673"/>
        <end position="685"/>
    </location>
</feature>
<feature type="mutagenesis site" description="Loss of localization at the brush border membrane." evidence="6">
    <original>D</original>
    <variation>G</variation>
    <location>
        <position position="140"/>
    </location>
</feature>
<protein>
    <recommendedName>
        <fullName>Amino acid transporter heavy chain SLC3A1</fullName>
    </recommendedName>
    <alternativeName>
        <fullName evidence="2">D2</fullName>
    </alternativeName>
    <alternativeName>
        <fullName evidence="2">Neutral and basic amino acid transport protein</fullName>
        <shortName evidence="2">NBAT</shortName>
    </alternativeName>
    <alternativeName>
        <fullName>Solute carrier family 3 member 1</fullName>
    </alternativeName>
    <alternativeName>
        <fullName>b(0,+)-type amino acid transporter-related heavy chain</fullName>
        <shortName evidence="7">rBAT</shortName>
    </alternativeName>
</protein>
<evidence type="ECO:0000250" key="1">
    <source>
        <dbReference type="UniProtKB" id="Q07837"/>
    </source>
</evidence>
<evidence type="ECO:0000250" key="2">
    <source>
        <dbReference type="UniProtKB" id="Q64319"/>
    </source>
</evidence>
<evidence type="ECO:0000255" key="3"/>
<evidence type="ECO:0000256" key="4">
    <source>
        <dbReference type="SAM" id="MobiDB-lite"/>
    </source>
</evidence>
<evidence type="ECO:0000269" key="5">
    <source>
    </source>
</evidence>
<evidence type="ECO:0000269" key="6">
    <source>
    </source>
</evidence>
<evidence type="ECO:0000303" key="7">
    <source>
    </source>
</evidence>
<evidence type="ECO:0000312" key="8">
    <source>
        <dbReference type="MGI" id="MGI:1195264"/>
    </source>
</evidence>
<name>SLC31_MOUSE</name>
<reference key="1">
    <citation type="journal article" date="2005" name="Science">
        <title>The transcriptional landscape of the mammalian genome.</title>
        <authorList>
            <person name="Carninci P."/>
            <person name="Kasukawa T."/>
            <person name="Katayama S."/>
            <person name="Gough J."/>
            <person name="Frith M.C."/>
            <person name="Maeda N."/>
            <person name="Oyama R."/>
            <person name="Ravasi T."/>
            <person name="Lenhard B."/>
            <person name="Wells C."/>
            <person name="Kodzius R."/>
            <person name="Shimokawa K."/>
            <person name="Bajic V.B."/>
            <person name="Brenner S.E."/>
            <person name="Batalov S."/>
            <person name="Forrest A.R."/>
            <person name="Zavolan M."/>
            <person name="Davis M.J."/>
            <person name="Wilming L.G."/>
            <person name="Aidinis V."/>
            <person name="Allen J.E."/>
            <person name="Ambesi-Impiombato A."/>
            <person name="Apweiler R."/>
            <person name="Aturaliya R.N."/>
            <person name="Bailey T.L."/>
            <person name="Bansal M."/>
            <person name="Baxter L."/>
            <person name="Beisel K.W."/>
            <person name="Bersano T."/>
            <person name="Bono H."/>
            <person name="Chalk A.M."/>
            <person name="Chiu K.P."/>
            <person name="Choudhary V."/>
            <person name="Christoffels A."/>
            <person name="Clutterbuck D.R."/>
            <person name="Crowe M.L."/>
            <person name="Dalla E."/>
            <person name="Dalrymple B.P."/>
            <person name="de Bono B."/>
            <person name="Della Gatta G."/>
            <person name="di Bernardo D."/>
            <person name="Down T."/>
            <person name="Engstrom P."/>
            <person name="Fagiolini M."/>
            <person name="Faulkner G."/>
            <person name="Fletcher C.F."/>
            <person name="Fukushima T."/>
            <person name="Furuno M."/>
            <person name="Futaki S."/>
            <person name="Gariboldi M."/>
            <person name="Georgii-Hemming P."/>
            <person name="Gingeras T.R."/>
            <person name="Gojobori T."/>
            <person name="Green R.E."/>
            <person name="Gustincich S."/>
            <person name="Harbers M."/>
            <person name="Hayashi Y."/>
            <person name="Hensch T.K."/>
            <person name="Hirokawa N."/>
            <person name="Hill D."/>
            <person name="Huminiecki L."/>
            <person name="Iacono M."/>
            <person name="Ikeo K."/>
            <person name="Iwama A."/>
            <person name="Ishikawa T."/>
            <person name="Jakt M."/>
            <person name="Kanapin A."/>
            <person name="Katoh M."/>
            <person name="Kawasawa Y."/>
            <person name="Kelso J."/>
            <person name="Kitamura H."/>
            <person name="Kitano H."/>
            <person name="Kollias G."/>
            <person name="Krishnan S.P."/>
            <person name="Kruger A."/>
            <person name="Kummerfeld S.K."/>
            <person name="Kurochkin I.V."/>
            <person name="Lareau L.F."/>
            <person name="Lazarevic D."/>
            <person name="Lipovich L."/>
            <person name="Liu J."/>
            <person name="Liuni S."/>
            <person name="McWilliam S."/>
            <person name="Madan Babu M."/>
            <person name="Madera M."/>
            <person name="Marchionni L."/>
            <person name="Matsuda H."/>
            <person name="Matsuzawa S."/>
            <person name="Miki H."/>
            <person name="Mignone F."/>
            <person name="Miyake S."/>
            <person name="Morris K."/>
            <person name="Mottagui-Tabar S."/>
            <person name="Mulder N."/>
            <person name="Nakano N."/>
            <person name="Nakauchi H."/>
            <person name="Ng P."/>
            <person name="Nilsson R."/>
            <person name="Nishiguchi S."/>
            <person name="Nishikawa S."/>
            <person name="Nori F."/>
            <person name="Ohara O."/>
            <person name="Okazaki Y."/>
            <person name="Orlando V."/>
            <person name="Pang K.C."/>
            <person name="Pavan W.J."/>
            <person name="Pavesi G."/>
            <person name="Pesole G."/>
            <person name="Petrovsky N."/>
            <person name="Piazza S."/>
            <person name="Reed J."/>
            <person name="Reid J.F."/>
            <person name="Ring B.Z."/>
            <person name="Ringwald M."/>
            <person name="Rost B."/>
            <person name="Ruan Y."/>
            <person name="Salzberg S.L."/>
            <person name="Sandelin A."/>
            <person name="Schneider C."/>
            <person name="Schoenbach C."/>
            <person name="Sekiguchi K."/>
            <person name="Semple C.A."/>
            <person name="Seno S."/>
            <person name="Sessa L."/>
            <person name="Sheng Y."/>
            <person name="Shibata Y."/>
            <person name="Shimada H."/>
            <person name="Shimada K."/>
            <person name="Silva D."/>
            <person name="Sinclair B."/>
            <person name="Sperling S."/>
            <person name="Stupka E."/>
            <person name="Sugiura K."/>
            <person name="Sultana R."/>
            <person name="Takenaka Y."/>
            <person name="Taki K."/>
            <person name="Tammoja K."/>
            <person name="Tan S.L."/>
            <person name="Tang S."/>
            <person name="Taylor M.S."/>
            <person name="Tegner J."/>
            <person name="Teichmann S.A."/>
            <person name="Ueda H.R."/>
            <person name="van Nimwegen E."/>
            <person name="Verardo R."/>
            <person name="Wei C.L."/>
            <person name="Yagi K."/>
            <person name="Yamanishi H."/>
            <person name="Zabarovsky E."/>
            <person name="Zhu S."/>
            <person name="Zimmer A."/>
            <person name="Hide W."/>
            <person name="Bult C."/>
            <person name="Grimmond S.M."/>
            <person name="Teasdale R.D."/>
            <person name="Liu E.T."/>
            <person name="Brusic V."/>
            <person name="Quackenbush J."/>
            <person name="Wahlestedt C."/>
            <person name="Mattick J.S."/>
            <person name="Hume D.A."/>
            <person name="Kai C."/>
            <person name="Sasaki D."/>
            <person name="Tomaru Y."/>
            <person name="Fukuda S."/>
            <person name="Kanamori-Katayama M."/>
            <person name="Suzuki M."/>
            <person name="Aoki J."/>
            <person name="Arakawa T."/>
            <person name="Iida J."/>
            <person name="Imamura K."/>
            <person name="Itoh M."/>
            <person name="Kato T."/>
            <person name="Kawaji H."/>
            <person name="Kawagashira N."/>
            <person name="Kawashima T."/>
            <person name="Kojima M."/>
            <person name="Kondo S."/>
            <person name="Konno H."/>
            <person name="Nakano K."/>
            <person name="Ninomiya N."/>
            <person name="Nishio T."/>
            <person name="Okada M."/>
            <person name="Plessy C."/>
            <person name="Shibata K."/>
            <person name="Shiraki T."/>
            <person name="Suzuki S."/>
            <person name="Tagami M."/>
            <person name="Waki K."/>
            <person name="Watahiki A."/>
            <person name="Okamura-Oho Y."/>
            <person name="Suzuki H."/>
            <person name="Kawai J."/>
            <person name="Hayashizaki Y."/>
        </authorList>
    </citation>
    <scope>NUCLEOTIDE SEQUENCE [LARGE SCALE MRNA]</scope>
    <source>
        <strain>C57BL/6J</strain>
        <tissue>Extraembryonic tissue</tissue>
        <tissue>Kidney</tissue>
        <tissue>Placenta</tissue>
    </source>
</reference>
<reference key="2">
    <citation type="journal article" date="2009" name="PLoS Biol.">
        <title>Lineage-specific biology revealed by a finished genome assembly of the mouse.</title>
        <authorList>
            <person name="Church D.M."/>
            <person name="Goodstadt L."/>
            <person name="Hillier L.W."/>
            <person name="Zody M.C."/>
            <person name="Goldstein S."/>
            <person name="She X."/>
            <person name="Bult C.J."/>
            <person name="Agarwala R."/>
            <person name="Cherry J.L."/>
            <person name="DiCuccio M."/>
            <person name="Hlavina W."/>
            <person name="Kapustin Y."/>
            <person name="Meric P."/>
            <person name="Maglott D."/>
            <person name="Birtle Z."/>
            <person name="Marques A.C."/>
            <person name="Graves T."/>
            <person name="Zhou S."/>
            <person name="Teague B."/>
            <person name="Potamousis K."/>
            <person name="Churas C."/>
            <person name="Place M."/>
            <person name="Herschleb J."/>
            <person name="Runnheim R."/>
            <person name="Forrest D."/>
            <person name="Amos-Landgraf J."/>
            <person name="Schwartz D.C."/>
            <person name="Cheng Z."/>
            <person name="Lindblad-Toh K."/>
            <person name="Eichler E.E."/>
            <person name="Ponting C.P."/>
        </authorList>
    </citation>
    <scope>NUCLEOTIDE SEQUENCE [LARGE SCALE GENOMIC DNA]</scope>
    <source>
        <strain>C57BL/6J</strain>
    </source>
</reference>
<reference key="3">
    <citation type="submission" date="2005-07" db="EMBL/GenBank/DDBJ databases">
        <authorList>
            <person name="Mural R.J."/>
            <person name="Adams M.D."/>
            <person name="Myers E.W."/>
            <person name="Smith H.O."/>
            <person name="Venter J.C."/>
        </authorList>
    </citation>
    <scope>NUCLEOTIDE SEQUENCE [LARGE SCALE GENOMIC DNA]</scope>
</reference>
<reference key="4">
    <citation type="journal article" date="2004" name="Genome Res.">
        <title>The status, quality, and expansion of the NIH full-length cDNA project: the Mammalian Gene Collection (MGC).</title>
        <authorList>
            <consortium name="The MGC Project Team"/>
        </authorList>
    </citation>
    <scope>NUCLEOTIDE SEQUENCE [LARGE SCALE MRNA]</scope>
    <source>
        <strain>FVB/N</strain>
        <tissue>Kidney</tissue>
    </source>
</reference>
<reference key="5">
    <citation type="journal article" date="2002" name="Am. J. Physiol.">
        <title>rBAT-b(0,+)AT heterodimer is the main apical reabsorption system for cystine in the kidney.</title>
        <authorList>
            <person name="Fernandez E."/>
            <person name="Carrascal M."/>
            <person name="Rousaud F."/>
            <person name="Abian J."/>
            <person name="Zorzano A."/>
            <person name="Palacin M."/>
            <person name="Chillaron J."/>
        </authorList>
    </citation>
    <scope>PROTEIN SEQUENCE OF 41-59; 70-80; 148-166; 174-202; 271-322; 365-372; 376-410; 439-451; 541-583; 622-629 AND 637-663</scope>
    <scope>IDENTIFICATION BY MASS SPECTROMETRY</scope>
    <scope>SUBUNIT</scope>
    <scope>SUBCELLULAR LOCATION</scope>
    <scope>TISSUE SPECIFICITY</scope>
</reference>
<reference key="6">
    <citation type="journal article" date="2010" name="Cell">
        <title>A tissue-specific atlas of mouse protein phosphorylation and expression.</title>
        <authorList>
            <person name="Huttlin E.L."/>
            <person name="Jedrychowski M.P."/>
            <person name="Elias J.E."/>
            <person name="Goswami T."/>
            <person name="Rad R."/>
            <person name="Beausoleil S.A."/>
            <person name="Villen J."/>
            <person name="Haas W."/>
            <person name="Sowa M.E."/>
            <person name="Gygi S.P."/>
        </authorList>
    </citation>
    <scope>IDENTIFICATION BY MASS SPECTROMETRY [LARGE SCALE ANALYSIS]</scope>
    <source>
        <tissue>Kidney</tissue>
        <tissue>Liver</tissue>
    </source>
</reference>
<reference key="7">
    <citation type="journal article" date="2016" name="Proc. Natl. Acad. Sci. U.S.A.">
        <title>Novel cystine transporter in renal proximal tubule identified as a missing partner of cystinuria-related plasma membrane protein rBAT/SLC3A1.</title>
        <authorList>
            <person name="Nagamori S."/>
            <person name="Wiriyasermkul P."/>
            <person name="Guarch M.E."/>
            <person name="Okuyama H."/>
            <person name="Nakagomi S."/>
            <person name="Tadagaki K."/>
            <person name="Nishinaka Y."/>
            <person name="Bodoy S."/>
            <person name="Takafuji K."/>
            <person name="Okuda S."/>
            <person name="Kurokawa J."/>
            <person name="Ohgaki R."/>
            <person name="Nunes V."/>
            <person name="Palacin M."/>
            <person name="Kanai Y."/>
        </authorList>
    </citation>
    <scope>FUNCTION</scope>
    <scope>SUBUNIT</scope>
    <scope>INTERACTION WITH SLC7A13</scope>
    <scope>SUBCELLULAR LOCATION</scope>
    <scope>TISSUE SPECIFICITY</scope>
    <scope>MUTAGENESIS OF ASP-140</scope>
    <scope>IDENTIFICATION BY MASS SPECTROMETRY</scope>
</reference>
<accession>Q91WV7</accession>
<sequence length="685" mass="78118">MDEDKGKRDPIQMSLKGCRTNNGFVQNEDIPEQDPDPGSRDTPQPNAVSIPAPEEPHLKAVRPYAGMPKEVLFQFSGQARYRVPREILFWLTVVSVFLLIGATIAIIVISPKCLDWWQAGPIYQIYPRSFKDSDKDGNGDLKGIQEKLDYITALNIKTLWITSFYKSSLKDFRYAVEDFKEIDPIFGTMKDFENLVAAIHDKGLKLIIDFIPNHTSDKHPWFQSSRTRSGKYTDYYIWHNCTHVNGVTTPPNNWLSVYGNSSWHFDEVRKQCYFHQFLKEQPDLNFRNPAVQEEIKEIITFWLSKGVDGFSFDAVKFLLEAKDLRNEIQVNTSQIPDTVTHYSELYHDFTTTQVGMHDIVRDFRQTMNQYSREPGRYRFMGAEASAESIERTMMYYGLPFIQEADFPFNKYFTTIGTLSGHTVYEVITSWMENMPEGKWPNWMTGGPETPRLTSRVGSEYVNAMHMLLFTLPGTPITYYGEEIGMGDISVTNFNESYDSTTLVSKSPMQWDNSSNAGFTEANHTWLPTNSDYHTVNVDVQKTQPSSALRLYQDLSLLHATELVLSRGWFCLLRDDSHSVVYTRELDGIDNVFLVVLNFGESSTVLNLQGIISDLPPELRIRLSTNSASKGSAVDTRAISLEKGEGLVLEHSTKAPLHQQAAFRDRCFVSSRACYSSALDILYSSC</sequence>
<organism>
    <name type="scientific">Mus musculus</name>
    <name type="common">Mouse</name>
    <dbReference type="NCBI Taxonomy" id="10090"/>
    <lineage>
        <taxon>Eukaryota</taxon>
        <taxon>Metazoa</taxon>
        <taxon>Chordata</taxon>
        <taxon>Craniata</taxon>
        <taxon>Vertebrata</taxon>
        <taxon>Euteleostomi</taxon>
        <taxon>Mammalia</taxon>
        <taxon>Eutheria</taxon>
        <taxon>Euarchontoglires</taxon>
        <taxon>Glires</taxon>
        <taxon>Rodentia</taxon>
        <taxon>Myomorpha</taxon>
        <taxon>Muroidea</taxon>
        <taxon>Muridae</taxon>
        <taxon>Murinae</taxon>
        <taxon>Mus</taxon>
        <taxon>Mus</taxon>
    </lineage>
</organism>
<comment type="function">
    <text evidence="1 6">Acts as a chaperone that facilitates biogenesis and trafficking of functional transporter heteromers to the plasma membrane (By similarity) (PubMed:26739563). Associates with SLC7A9 to form a functional transporter complex that mediates the electrogenic exchange between cationic amino acids and neutral amino acids, with a stoichiometry of 1:1. SLC7A9-SLC3A1 transporter has system b(0,+)-like activity with high affinity for extracellular cationic amino acids and L-cystine and lower affinity for intracellular neutral amino acids. Substrate exchange is driven by high concentration of intracellular neutral amino acids and the intracellular reduction of L-cystine to L-cysteine. SLC7A9-SLC3A1 acts as a major transporter for reabsorption of L-cystine and dibasic amino acids across the brush border membrane in early proximal tubules (By similarity). Associates with SLC7A13 to form a functional complex that transports anionic and neutral amino acids via exchange or facilitated diffusion. SLC7A13-SLC3A1 may act as a major transporter for L-cystine in late proximal tubules, ensuring its reabsorption from the luminal fluid in exchange for cytosolic L-glutamate or L-aspartate (PubMed:26739563).</text>
</comment>
<comment type="subunit">
    <text evidence="1 5 6">Disulfide-linked heterodimer composed of the catalytic light subunit SLC7A9 and the heavy subunit SLC3A1. The heterodimer is the minimal functional unit. Assembles in non-covalently linked heterotetramers (dimers of heterodimers) and higher order oligomers; the oligomerization is mediated by SLC3A1 likely to prevent degradation in the endoplasmic reticulum and facilitate heteromer trafficking to the plasma membrane (By similarity) (PubMed:12167606). Disulfide-linked heterodimer composed of the catalytic light subunit SLC7A13 and the heavy subunit SLC3A1 (PubMed:26739563).</text>
</comment>
<comment type="subcellular location">
    <subcellularLocation>
        <location evidence="5">Cell membrane</location>
        <topology evidence="3">Single-pass type II membrane protein</topology>
    </subcellularLocation>
    <subcellularLocation>
        <location evidence="6">Apical cell membrane</location>
        <topology evidence="3">Single-pass type II membrane protein</topology>
    </subcellularLocation>
</comment>
<comment type="tissue specificity">
    <text evidence="5 6">Expressed in the brush border membrane in the kidney (at protein level). Highly expressed in renal tubules in the outer stripe of the outer medulla and medullary ray (at protein level). Also detected in the renal cortex. More abundant in male than female kidneys.</text>
</comment>
<gene>
    <name evidence="7 8" type="primary">Slc3a1</name>
    <name type="synonym">Nbat</name>
</gene>
<proteinExistence type="evidence at protein level"/>
<keyword id="KW-0029">Amino-acid transport</keyword>
<keyword id="KW-0106">Calcium</keyword>
<keyword id="KW-1003">Cell membrane</keyword>
<keyword id="KW-0903">Direct protein sequencing</keyword>
<keyword id="KW-1015">Disulfide bond</keyword>
<keyword id="KW-0325">Glycoprotein</keyword>
<keyword id="KW-0472">Membrane</keyword>
<keyword id="KW-0479">Metal-binding</keyword>
<keyword id="KW-0597">Phosphoprotein</keyword>
<keyword id="KW-1185">Reference proteome</keyword>
<keyword id="KW-0735">Signal-anchor</keyword>
<keyword id="KW-0812">Transmembrane</keyword>
<keyword id="KW-1133">Transmembrane helix</keyword>
<keyword id="KW-0813">Transport</keyword>
<dbReference type="EMBL" id="AK052623">
    <property type="protein sequence ID" value="BAC35066.1"/>
    <property type="molecule type" value="mRNA"/>
</dbReference>
<dbReference type="EMBL" id="AK132275">
    <property type="protein sequence ID" value="BAE21075.1"/>
    <property type="molecule type" value="mRNA"/>
</dbReference>
<dbReference type="EMBL" id="AC113476">
    <property type="status" value="NOT_ANNOTATED_CDS"/>
    <property type="molecule type" value="Genomic_DNA"/>
</dbReference>
<dbReference type="EMBL" id="CH466537">
    <property type="protein sequence ID" value="EDL38594.1"/>
    <property type="molecule type" value="Genomic_DNA"/>
</dbReference>
<dbReference type="EMBL" id="BC013441">
    <property type="protein sequence ID" value="AAH13441.1"/>
    <property type="molecule type" value="mRNA"/>
</dbReference>
<dbReference type="CCDS" id="CCDS37711.1"/>
<dbReference type="RefSeq" id="NP_033231.2">
    <property type="nucleotide sequence ID" value="NM_009205.2"/>
</dbReference>
<dbReference type="SMR" id="Q91WV7"/>
<dbReference type="BioGRID" id="203311">
    <property type="interactions" value="3"/>
</dbReference>
<dbReference type="FunCoup" id="Q91WV7">
    <property type="interactions" value="131"/>
</dbReference>
<dbReference type="STRING" id="10090.ENSMUSP00000024944"/>
<dbReference type="CAZy" id="GH13">
    <property type="family name" value="Glycoside Hydrolase Family 13"/>
</dbReference>
<dbReference type="GlyCosmos" id="Q91WV7">
    <property type="glycosylation" value="6 sites, 14 glycans"/>
</dbReference>
<dbReference type="GlyGen" id="Q91WV7">
    <property type="glycosylation" value="6 sites"/>
</dbReference>
<dbReference type="iPTMnet" id="Q91WV7"/>
<dbReference type="PhosphoSitePlus" id="Q91WV7"/>
<dbReference type="jPOST" id="Q91WV7"/>
<dbReference type="PaxDb" id="10090-ENSMUSP00000024944"/>
<dbReference type="PeptideAtlas" id="Q91WV7"/>
<dbReference type="ProteomicsDB" id="261075"/>
<dbReference type="Antibodypedia" id="29895">
    <property type="antibodies" value="235 antibodies from 29 providers"/>
</dbReference>
<dbReference type="DNASU" id="20532"/>
<dbReference type="Ensembl" id="ENSMUST00000024944.9">
    <property type="protein sequence ID" value="ENSMUSP00000024944.8"/>
    <property type="gene ID" value="ENSMUSG00000024131.9"/>
</dbReference>
<dbReference type="GeneID" id="20532"/>
<dbReference type="KEGG" id="mmu:20532"/>
<dbReference type="UCSC" id="uc008dtl.1">
    <property type="organism name" value="mouse"/>
</dbReference>
<dbReference type="AGR" id="MGI:1195264"/>
<dbReference type="CTD" id="6519"/>
<dbReference type="MGI" id="MGI:1195264">
    <property type="gene designation" value="Slc3a1"/>
</dbReference>
<dbReference type="VEuPathDB" id="HostDB:ENSMUSG00000024131"/>
<dbReference type="eggNOG" id="KOG0471">
    <property type="taxonomic scope" value="Eukaryota"/>
</dbReference>
<dbReference type="GeneTree" id="ENSGT00940000158103"/>
<dbReference type="HOGENOM" id="CLU_006462_8_0_1"/>
<dbReference type="InParanoid" id="Q91WV7"/>
<dbReference type="OMA" id="PNGEKWA"/>
<dbReference type="OrthoDB" id="1740265at2759"/>
<dbReference type="PhylomeDB" id="Q91WV7"/>
<dbReference type="TreeFam" id="TF314498"/>
<dbReference type="Reactome" id="R-MMU-352230">
    <property type="pathway name" value="Amino acid transport across the plasma membrane"/>
</dbReference>
<dbReference type="BioGRID-ORCS" id="20532">
    <property type="hits" value="1 hit in 76 CRISPR screens"/>
</dbReference>
<dbReference type="ChiTaRS" id="Slc3a1">
    <property type="organism name" value="mouse"/>
</dbReference>
<dbReference type="PRO" id="PR:Q91WV7"/>
<dbReference type="Proteomes" id="UP000000589">
    <property type="component" value="Chromosome 17"/>
</dbReference>
<dbReference type="RNAct" id="Q91WV7">
    <property type="molecule type" value="protein"/>
</dbReference>
<dbReference type="Bgee" id="ENSMUSG00000024131">
    <property type="expression patterns" value="Expressed in right kidney and 84 other cell types or tissues"/>
</dbReference>
<dbReference type="GO" id="GO:0016324">
    <property type="term" value="C:apical plasma membrane"/>
    <property type="evidence" value="ECO:0000353"/>
    <property type="project" value="MGI"/>
</dbReference>
<dbReference type="GO" id="GO:0031526">
    <property type="term" value="C:brush border membrane"/>
    <property type="evidence" value="ECO:0000314"/>
    <property type="project" value="UniProtKB"/>
</dbReference>
<dbReference type="GO" id="GO:0005743">
    <property type="term" value="C:mitochondrial inner membrane"/>
    <property type="evidence" value="ECO:0007005"/>
    <property type="project" value="MGI"/>
</dbReference>
<dbReference type="GO" id="GO:0005774">
    <property type="term" value="C:vacuolar membrane"/>
    <property type="evidence" value="ECO:0007669"/>
    <property type="project" value="Ensembl"/>
</dbReference>
<dbReference type="GO" id="GO:0046872">
    <property type="term" value="F:metal ion binding"/>
    <property type="evidence" value="ECO:0007669"/>
    <property type="project" value="UniProtKB-KW"/>
</dbReference>
<dbReference type="GO" id="GO:0046982">
    <property type="term" value="F:protein heterodimerization activity"/>
    <property type="evidence" value="ECO:0000353"/>
    <property type="project" value="MGI"/>
</dbReference>
<dbReference type="GO" id="GO:0044877">
    <property type="term" value="F:protein-containing complex binding"/>
    <property type="evidence" value="ECO:0007669"/>
    <property type="project" value="Ensembl"/>
</dbReference>
<dbReference type="GO" id="GO:0015810">
    <property type="term" value="P:aspartate transmembrane transport"/>
    <property type="evidence" value="ECO:0000314"/>
    <property type="project" value="MGI"/>
</dbReference>
<dbReference type="GO" id="GO:0005975">
    <property type="term" value="P:carbohydrate metabolic process"/>
    <property type="evidence" value="ECO:0007669"/>
    <property type="project" value="InterPro"/>
</dbReference>
<dbReference type="GO" id="GO:0010467">
    <property type="term" value="P:gene expression"/>
    <property type="evidence" value="ECO:0000315"/>
    <property type="project" value="MGI"/>
</dbReference>
<dbReference type="GO" id="GO:0015811">
    <property type="term" value="P:L-cystine transport"/>
    <property type="evidence" value="ECO:0000314"/>
    <property type="project" value="MGI"/>
</dbReference>
<dbReference type="GO" id="GO:0015813">
    <property type="term" value="P:L-glutamate transmembrane transport"/>
    <property type="evidence" value="ECO:0000314"/>
    <property type="project" value="MGI"/>
</dbReference>
<dbReference type="CDD" id="cd11359">
    <property type="entry name" value="AmyAc_SLC3A1"/>
    <property type="match status" value="1"/>
</dbReference>
<dbReference type="FunFam" id="3.90.400.10:FF:000001">
    <property type="entry name" value="Maltase A3, isoform A"/>
    <property type="match status" value="1"/>
</dbReference>
<dbReference type="FunFam" id="2.60.40.1180:FF:000026">
    <property type="entry name" value="Solute carrier family 3 (amino acid transporter heavy chain), member 1"/>
    <property type="match status" value="1"/>
</dbReference>
<dbReference type="Gene3D" id="3.20.20.80">
    <property type="entry name" value="Glycosidases"/>
    <property type="match status" value="1"/>
</dbReference>
<dbReference type="Gene3D" id="2.60.40.1180">
    <property type="entry name" value="Golgi alpha-mannosidase II"/>
    <property type="match status" value="1"/>
</dbReference>
<dbReference type="Gene3D" id="3.90.400.10">
    <property type="entry name" value="Oligo-1,6-glucosidase, Domain 2"/>
    <property type="match status" value="1"/>
</dbReference>
<dbReference type="InterPro" id="IPR006047">
    <property type="entry name" value="Glyco_hydro_13_cat_dom"/>
</dbReference>
<dbReference type="InterPro" id="IPR013780">
    <property type="entry name" value="Glyco_hydro_b"/>
</dbReference>
<dbReference type="InterPro" id="IPR017853">
    <property type="entry name" value="Glycoside_hydrolase_SF"/>
</dbReference>
<dbReference type="InterPro" id="IPR045857">
    <property type="entry name" value="O16G_dom_2"/>
</dbReference>
<dbReference type="PANTHER" id="PTHR10357">
    <property type="entry name" value="ALPHA-AMYLASE FAMILY MEMBER"/>
    <property type="match status" value="1"/>
</dbReference>
<dbReference type="PANTHER" id="PTHR10357:SF179">
    <property type="entry name" value="NEUTRAL AND BASIC AMINO ACID TRANSPORT PROTEIN RBAT"/>
    <property type="match status" value="1"/>
</dbReference>
<dbReference type="Pfam" id="PF00128">
    <property type="entry name" value="Alpha-amylase"/>
    <property type="match status" value="1"/>
</dbReference>
<dbReference type="SMART" id="SM00642">
    <property type="entry name" value="Aamy"/>
    <property type="match status" value="1"/>
</dbReference>
<dbReference type="SUPFAM" id="SSF51445">
    <property type="entry name" value="(Trans)glycosidases"/>
    <property type="match status" value="1"/>
</dbReference>